<protein>
    <recommendedName>
        <fullName evidence="1">Periplasmic nitrate reductase</fullName>
        <ecNumber evidence="1">1.9.6.1</ecNumber>
    </recommendedName>
</protein>
<feature type="signal peptide" description="Tat-type signal" evidence="1">
    <location>
        <begin position="1"/>
        <end position="31"/>
    </location>
</feature>
<feature type="chain" id="PRO_1000186359" description="Periplasmic nitrate reductase" evidence="1">
    <location>
        <begin position="32"/>
        <end position="828"/>
    </location>
</feature>
<feature type="domain" description="4Fe-4S Mo/W bis-MGD-type" evidence="1">
    <location>
        <begin position="39"/>
        <end position="95"/>
    </location>
</feature>
<feature type="binding site" evidence="1">
    <location>
        <position position="46"/>
    </location>
    <ligand>
        <name>[4Fe-4S] cluster</name>
        <dbReference type="ChEBI" id="CHEBI:49883"/>
    </ligand>
</feature>
<feature type="binding site" evidence="1">
    <location>
        <position position="49"/>
    </location>
    <ligand>
        <name>[4Fe-4S] cluster</name>
        <dbReference type="ChEBI" id="CHEBI:49883"/>
    </ligand>
</feature>
<feature type="binding site" evidence="1">
    <location>
        <position position="53"/>
    </location>
    <ligand>
        <name>[4Fe-4S] cluster</name>
        <dbReference type="ChEBI" id="CHEBI:49883"/>
    </ligand>
</feature>
<feature type="binding site" evidence="1">
    <location>
        <position position="81"/>
    </location>
    <ligand>
        <name>[4Fe-4S] cluster</name>
        <dbReference type="ChEBI" id="CHEBI:49883"/>
    </ligand>
</feature>
<feature type="binding site" evidence="1">
    <location>
        <position position="83"/>
    </location>
    <ligand>
        <name>Mo-bis(molybdopterin guanine dinucleotide)</name>
        <dbReference type="ChEBI" id="CHEBI:60539"/>
    </ligand>
</feature>
<feature type="binding site" evidence="1">
    <location>
        <position position="150"/>
    </location>
    <ligand>
        <name>Mo-bis(molybdopterin guanine dinucleotide)</name>
        <dbReference type="ChEBI" id="CHEBI:60539"/>
    </ligand>
</feature>
<feature type="binding site" evidence="1">
    <location>
        <position position="175"/>
    </location>
    <ligand>
        <name>Mo-bis(molybdopterin guanine dinucleotide)</name>
        <dbReference type="ChEBI" id="CHEBI:60539"/>
    </ligand>
</feature>
<feature type="binding site" evidence="1">
    <location>
        <position position="179"/>
    </location>
    <ligand>
        <name>Mo-bis(molybdopterin guanine dinucleotide)</name>
        <dbReference type="ChEBI" id="CHEBI:60539"/>
    </ligand>
</feature>
<feature type="binding site" evidence="1">
    <location>
        <begin position="212"/>
        <end position="219"/>
    </location>
    <ligand>
        <name>Mo-bis(molybdopterin guanine dinucleotide)</name>
        <dbReference type="ChEBI" id="CHEBI:60539"/>
    </ligand>
</feature>
<feature type="binding site" evidence="1">
    <location>
        <begin position="243"/>
        <end position="247"/>
    </location>
    <ligand>
        <name>Mo-bis(molybdopterin guanine dinucleotide)</name>
        <dbReference type="ChEBI" id="CHEBI:60539"/>
    </ligand>
</feature>
<feature type="binding site" evidence="1">
    <location>
        <begin position="262"/>
        <end position="264"/>
    </location>
    <ligand>
        <name>Mo-bis(molybdopterin guanine dinucleotide)</name>
        <dbReference type="ChEBI" id="CHEBI:60539"/>
    </ligand>
</feature>
<feature type="binding site" evidence="1">
    <location>
        <position position="372"/>
    </location>
    <ligand>
        <name>Mo-bis(molybdopterin guanine dinucleotide)</name>
        <dbReference type="ChEBI" id="CHEBI:60539"/>
    </ligand>
</feature>
<feature type="binding site" evidence="1">
    <location>
        <position position="376"/>
    </location>
    <ligand>
        <name>Mo-bis(molybdopterin guanine dinucleotide)</name>
        <dbReference type="ChEBI" id="CHEBI:60539"/>
    </ligand>
</feature>
<feature type="binding site" evidence="1">
    <location>
        <position position="482"/>
    </location>
    <ligand>
        <name>Mo-bis(molybdopterin guanine dinucleotide)</name>
        <dbReference type="ChEBI" id="CHEBI:60539"/>
    </ligand>
</feature>
<feature type="binding site" evidence="1">
    <location>
        <begin position="508"/>
        <end position="509"/>
    </location>
    <ligand>
        <name>Mo-bis(molybdopterin guanine dinucleotide)</name>
        <dbReference type="ChEBI" id="CHEBI:60539"/>
    </ligand>
</feature>
<feature type="binding site" evidence="1">
    <location>
        <position position="531"/>
    </location>
    <ligand>
        <name>Mo-bis(molybdopterin guanine dinucleotide)</name>
        <dbReference type="ChEBI" id="CHEBI:60539"/>
    </ligand>
</feature>
<feature type="binding site" evidence="1">
    <location>
        <position position="558"/>
    </location>
    <ligand>
        <name>Mo-bis(molybdopterin guanine dinucleotide)</name>
        <dbReference type="ChEBI" id="CHEBI:60539"/>
    </ligand>
</feature>
<feature type="binding site" evidence="1">
    <location>
        <begin position="718"/>
        <end position="727"/>
    </location>
    <ligand>
        <name>Mo-bis(molybdopterin guanine dinucleotide)</name>
        <dbReference type="ChEBI" id="CHEBI:60539"/>
    </ligand>
</feature>
<feature type="binding site" evidence="1">
    <location>
        <position position="794"/>
    </location>
    <ligand>
        <name>substrate</name>
    </ligand>
</feature>
<feature type="binding site" evidence="1">
    <location>
        <position position="802"/>
    </location>
    <ligand>
        <name>Mo-bis(molybdopterin guanine dinucleotide)</name>
        <dbReference type="ChEBI" id="CHEBI:60539"/>
    </ligand>
</feature>
<feature type="binding site" evidence="1">
    <location>
        <position position="819"/>
    </location>
    <ligand>
        <name>Mo-bis(molybdopterin guanine dinucleotide)</name>
        <dbReference type="ChEBI" id="CHEBI:60539"/>
    </ligand>
</feature>
<dbReference type="EC" id="1.9.6.1" evidence="1"/>
<dbReference type="EMBL" id="CU928160">
    <property type="protein sequence ID" value="CAQ99133.1"/>
    <property type="molecule type" value="Genomic_DNA"/>
</dbReference>
<dbReference type="RefSeq" id="WP_000778057.1">
    <property type="nucleotide sequence ID" value="NC_011741.1"/>
</dbReference>
<dbReference type="SMR" id="B7M5P6"/>
<dbReference type="GeneID" id="75206458"/>
<dbReference type="KEGG" id="ecr:ECIAI1_2289"/>
<dbReference type="HOGENOM" id="CLU_000422_13_4_6"/>
<dbReference type="GO" id="GO:0016020">
    <property type="term" value="C:membrane"/>
    <property type="evidence" value="ECO:0007669"/>
    <property type="project" value="TreeGrafter"/>
</dbReference>
<dbReference type="GO" id="GO:0009325">
    <property type="term" value="C:nitrate reductase complex"/>
    <property type="evidence" value="ECO:0007669"/>
    <property type="project" value="TreeGrafter"/>
</dbReference>
<dbReference type="GO" id="GO:0042597">
    <property type="term" value="C:periplasmic space"/>
    <property type="evidence" value="ECO:0007669"/>
    <property type="project" value="UniProtKB-SubCell"/>
</dbReference>
<dbReference type="GO" id="GO:0051539">
    <property type="term" value="F:4 iron, 4 sulfur cluster binding"/>
    <property type="evidence" value="ECO:0007669"/>
    <property type="project" value="UniProtKB-KW"/>
</dbReference>
<dbReference type="GO" id="GO:0009055">
    <property type="term" value="F:electron transfer activity"/>
    <property type="evidence" value="ECO:0007669"/>
    <property type="project" value="UniProtKB-UniRule"/>
</dbReference>
<dbReference type="GO" id="GO:0005506">
    <property type="term" value="F:iron ion binding"/>
    <property type="evidence" value="ECO:0007669"/>
    <property type="project" value="UniProtKB-UniRule"/>
</dbReference>
<dbReference type="GO" id="GO:0030151">
    <property type="term" value="F:molybdenum ion binding"/>
    <property type="evidence" value="ECO:0007669"/>
    <property type="project" value="InterPro"/>
</dbReference>
<dbReference type="GO" id="GO:0043546">
    <property type="term" value="F:molybdopterin cofactor binding"/>
    <property type="evidence" value="ECO:0007669"/>
    <property type="project" value="InterPro"/>
</dbReference>
<dbReference type="GO" id="GO:0050140">
    <property type="term" value="F:nitrate reductase (cytochrome) activity"/>
    <property type="evidence" value="ECO:0007669"/>
    <property type="project" value="UniProtKB-EC"/>
</dbReference>
<dbReference type="GO" id="GO:0045333">
    <property type="term" value="P:cellular respiration"/>
    <property type="evidence" value="ECO:0007669"/>
    <property type="project" value="UniProtKB-ARBA"/>
</dbReference>
<dbReference type="GO" id="GO:0006777">
    <property type="term" value="P:Mo-molybdopterin cofactor biosynthetic process"/>
    <property type="evidence" value="ECO:0007669"/>
    <property type="project" value="UniProtKB-UniRule"/>
</dbReference>
<dbReference type="GO" id="GO:0042128">
    <property type="term" value="P:nitrate assimilation"/>
    <property type="evidence" value="ECO:0007669"/>
    <property type="project" value="UniProtKB-UniRule"/>
</dbReference>
<dbReference type="CDD" id="cd02791">
    <property type="entry name" value="MopB_CT_Nitrate-R-NapA-like"/>
    <property type="match status" value="1"/>
</dbReference>
<dbReference type="CDD" id="cd02754">
    <property type="entry name" value="MopB_Nitrate-R-NapA-like"/>
    <property type="match status" value="1"/>
</dbReference>
<dbReference type="FunFam" id="2.40.40.20:FF:000005">
    <property type="entry name" value="Periplasmic nitrate reductase"/>
    <property type="match status" value="1"/>
</dbReference>
<dbReference type="FunFam" id="3.40.228.10:FF:000001">
    <property type="entry name" value="Periplasmic nitrate reductase"/>
    <property type="match status" value="1"/>
</dbReference>
<dbReference type="Gene3D" id="2.40.40.20">
    <property type="match status" value="1"/>
</dbReference>
<dbReference type="Gene3D" id="3.30.200.210">
    <property type="match status" value="1"/>
</dbReference>
<dbReference type="Gene3D" id="3.40.50.740">
    <property type="match status" value="1"/>
</dbReference>
<dbReference type="Gene3D" id="3.40.228.10">
    <property type="entry name" value="Dimethylsulfoxide Reductase, domain 2"/>
    <property type="match status" value="1"/>
</dbReference>
<dbReference type="HAMAP" id="MF_01630">
    <property type="entry name" value="Nitrate_reduct_NapA"/>
    <property type="match status" value="1"/>
</dbReference>
<dbReference type="InterPro" id="IPR009010">
    <property type="entry name" value="Asp_de-COase-like_dom_sf"/>
</dbReference>
<dbReference type="InterPro" id="IPR041957">
    <property type="entry name" value="CT_Nitrate-R-NapA-like"/>
</dbReference>
<dbReference type="InterPro" id="IPR006657">
    <property type="entry name" value="MoPterin_dinucl-bd_dom"/>
</dbReference>
<dbReference type="InterPro" id="IPR006656">
    <property type="entry name" value="Mopterin_OxRdtase"/>
</dbReference>
<dbReference type="InterPro" id="IPR006963">
    <property type="entry name" value="Mopterin_OxRdtase_4Fe-4S_dom"/>
</dbReference>
<dbReference type="InterPro" id="IPR027467">
    <property type="entry name" value="MopterinOxRdtase_cofactor_BS"/>
</dbReference>
<dbReference type="InterPro" id="IPR010051">
    <property type="entry name" value="Periplasm_NO3_reductase_lsu"/>
</dbReference>
<dbReference type="InterPro" id="IPR050123">
    <property type="entry name" value="Prok_molybdopt-oxidoreductase"/>
</dbReference>
<dbReference type="InterPro" id="IPR006311">
    <property type="entry name" value="TAT_signal"/>
</dbReference>
<dbReference type="InterPro" id="IPR019546">
    <property type="entry name" value="TAT_signal_bac_arc"/>
</dbReference>
<dbReference type="NCBIfam" id="TIGR01706">
    <property type="entry name" value="NAPA"/>
    <property type="match status" value="1"/>
</dbReference>
<dbReference type="NCBIfam" id="NF010055">
    <property type="entry name" value="PRK13532.1"/>
    <property type="match status" value="1"/>
</dbReference>
<dbReference type="NCBIfam" id="TIGR01409">
    <property type="entry name" value="TAT_signal_seq"/>
    <property type="match status" value="1"/>
</dbReference>
<dbReference type="PANTHER" id="PTHR43105:SF11">
    <property type="entry name" value="PERIPLASMIC NITRATE REDUCTASE"/>
    <property type="match status" value="1"/>
</dbReference>
<dbReference type="PANTHER" id="PTHR43105">
    <property type="entry name" value="RESPIRATORY NITRATE REDUCTASE"/>
    <property type="match status" value="1"/>
</dbReference>
<dbReference type="Pfam" id="PF04879">
    <property type="entry name" value="Molybdop_Fe4S4"/>
    <property type="match status" value="1"/>
</dbReference>
<dbReference type="Pfam" id="PF00384">
    <property type="entry name" value="Molybdopterin"/>
    <property type="match status" value="1"/>
</dbReference>
<dbReference type="Pfam" id="PF01568">
    <property type="entry name" value="Molydop_binding"/>
    <property type="match status" value="1"/>
</dbReference>
<dbReference type="SMART" id="SM00926">
    <property type="entry name" value="Molybdop_Fe4S4"/>
    <property type="match status" value="1"/>
</dbReference>
<dbReference type="SUPFAM" id="SSF50692">
    <property type="entry name" value="ADC-like"/>
    <property type="match status" value="1"/>
</dbReference>
<dbReference type="SUPFAM" id="SSF53706">
    <property type="entry name" value="Formate dehydrogenase/DMSO reductase, domains 1-3"/>
    <property type="match status" value="1"/>
</dbReference>
<dbReference type="PROSITE" id="PS51669">
    <property type="entry name" value="4FE4S_MOW_BIS_MGD"/>
    <property type="match status" value="1"/>
</dbReference>
<dbReference type="PROSITE" id="PS00551">
    <property type="entry name" value="MOLYBDOPTERIN_PROK_1"/>
    <property type="match status" value="1"/>
</dbReference>
<dbReference type="PROSITE" id="PS51318">
    <property type="entry name" value="TAT"/>
    <property type="match status" value="1"/>
</dbReference>
<evidence type="ECO:0000255" key="1">
    <source>
        <dbReference type="HAMAP-Rule" id="MF_01630"/>
    </source>
</evidence>
<proteinExistence type="inferred from homology"/>
<sequence length="828" mass="93026">MKLSRRSFMKANAVAAAAAAAGLSVPGVARAVVGQQEAIKWDKAPCRFCGTGCGVLVGTQQGRVVACQGDPDAPVNRGLNCIKGYFLPKIMYGKDRLTQPLLRMKNGKYDKEGEFTPITWDQAFDVMEEKFKTALKEKGPESIGMFGSGQWTIWEGYAASKLFKAGFRSNNIDPNARHCMASAVVGFMRTFGMDEPMGCYDDIEQADAFVLWGANMAEMHPILWSRITNRRLSNQNVTVAVLSTYQHRSFELADNGIIFTPQSDLVILNYIANYIIQNNAINQDFFSKHVNLRKGATDIGYGLRPTHPLEKAAKNPGSDASEPMSFEDYKAFVAEYTLEKTAEMTGVPKDQLEQLAQLYADPNKKVISYWTMGFNQHTRGVWANNLVYNLHLLTGKISQPGCGPFSLTGQPSACGTAREVGTFAHRLPADMVVTNEKHRDICEKKWNIPGGTIPAKIGLHAVAQDRALKDGKLNVYWTMCTNNMQAGPNINEERMPGWRDPRNFIIVSDPYPTVSALAADLILPTAMWVEKEGAYGNAERRTQFWRQQVQAPGEAKSDLWQLVQFSRRFKTEEVWPEELLAKKPELRGKTLYEVLYATPEVSKFPVSELAEDQLNDESRELGFYLQKGLFEEYAWFGRGHGHDLAPFDDYHKARGLRWPVVNGKETQWRYSEGNDPYVKAGEGYKFYGKPDGKAVIFALPFEPAAEAPDEEYDLWLSTGRVLEHWHTGSMTRRVPELHRAFPEAVLFIHPLDAKARDLRRGDKVKVVSRRGEVISIVETRGRNRPPQGLVYMPFFDAAQLVNKLTLDATDPLSKETDFKKCAVKLEKV</sequence>
<gene>
    <name evidence="1" type="primary">napA</name>
    <name type="ordered locus">ECIAI1_2289</name>
</gene>
<reference key="1">
    <citation type="journal article" date="2009" name="PLoS Genet.">
        <title>Organised genome dynamics in the Escherichia coli species results in highly diverse adaptive paths.</title>
        <authorList>
            <person name="Touchon M."/>
            <person name="Hoede C."/>
            <person name="Tenaillon O."/>
            <person name="Barbe V."/>
            <person name="Baeriswyl S."/>
            <person name="Bidet P."/>
            <person name="Bingen E."/>
            <person name="Bonacorsi S."/>
            <person name="Bouchier C."/>
            <person name="Bouvet O."/>
            <person name="Calteau A."/>
            <person name="Chiapello H."/>
            <person name="Clermont O."/>
            <person name="Cruveiller S."/>
            <person name="Danchin A."/>
            <person name="Diard M."/>
            <person name="Dossat C."/>
            <person name="Karoui M.E."/>
            <person name="Frapy E."/>
            <person name="Garry L."/>
            <person name="Ghigo J.M."/>
            <person name="Gilles A.M."/>
            <person name="Johnson J."/>
            <person name="Le Bouguenec C."/>
            <person name="Lescat M."/>
            <person name="Mangenot S."/>
            <person name="Martinez-Jehanne V."/>
            <person name="Matic I."/>
            <person name="Nassif X."/>
            <person name="Oztas S."/>
            <person name="Petit M.A."/>
            <person name="Pichon C."/>
            <person name="Rouy Z."/>
            <person name="Ruf C.S."/>
            <person name="Schneider D."/>
            <person name="Tourret J."/>
            <person name="Vacherie B."/>
            <person name="Vallenet D."/>
            <person name="Medigue C."/>
            <person name="Rocha E.P.C."/>
            <person name="Denamur E."/>
        </authorList>
    </citation>
    <scope>NUCLEOTIDE SEQUENCE [LARGE SCALE GENOMIC DNA]</scope>
    <source>
        <strain>IAI1</strain>
    </source>
</reference>
<name>NAPA_ECO8A</name>
<accession>B7M5P6</accession>
<keyword id="KW-0004">4Fe-4S</keyword>
<keyword id="KW-0249">Electron transport</keyword>
<keyword id="KW-0408">Iron</keyword>
<keyword id="KW-0411">Iron-sulfur</keyword>
<keyword id="KW-0479">Metal-binding</keyword>
<keyword id="KW-0500">Molybdenum</keyword>
<keyword id="KW-0534">Nitrate assimilation</keyword>
<keyword id="KW-0560">Oxidoreductase</keyword>
<keyword id="KW-0574">Periplasm</keyword>
<keyword id="KW-0732">Signal</keyword>
<keyword id="KW-0813">Transport</keyword>
<organism>
    <name type="scientific">Escherichia coli O8 (strain IAI1)</name>
    <dbReference type="NCBI Taxonomy" id="585034"/>
    <lineage>
        <taxon>Bacteria</taxon>
        <taxon>Pseudomonadati</taxon>
        <taxon>Pseudomonadota</taxon>
        <taxon>Gammaproteobacteria</taxon>
        <taxon>Enterobacterales</taxon>
        <taxon>Enterobacteriaceae</taxon>
        <taxon>Escherichia</taxon>
    </lineage>
</organism>
<comment type="function">
    <text evidence="1">Catalytic subunit of the periplasmic nitrate reductase complex NapAB. Receives electrons from NapB and catalyzes the reduction of nitrate to nitrite.</text>
</comment>
<comment type="catalytic activity">
    <reaction evidence="1">
        <text>2 Fe(II)-[cytochrome] + nitrate + 2 H(+) = 2 Fe(III)-[cytochrome] + nitrite + H2O</text>
        <dbReference type="Rhea" id="RHEA:12909"/>
        <dbReference type="Rhea" id="RHEA-COMP:11777"/>
        <dbReference type="Rhea" id="RHEA-COMP:11778"/>
        <dbReference type="ChEBI" id="CHEBI:15377"/>
        <dbReference type="ChEBI" id="CHEBI:15378"/>
        <dbReference type="ChEBI" id="CHEBI:16301"/>
        <dbReference type="ChEBI" id="CHEBI:17632"/>
        <dbReference type="ChEBI" id="CHEBI:29033"/>
        <dbReference type="ChEBI" id="CHEBI:29034"/>
        <dbReference type="EC" id="1.9.6.1"/>
    </reaction>
</comment>
<comment type="cofactor">
    <cofactor evidence="1">
        <name>[4Fe-4S] cluster</name>
        <dbReference type="ChEBI" id="CHEBI:49883"/>
    </cofactor>
    <text evidence="1">Binds 1 [4Fe-4S] cluster.</text>
</comment>
<comment type="cofactor">
    <cofactor evidence="1">
        <name>Mo-bis(molybdopterin guanine dinucleotide)</name>
        <dbReference type="ChEBI" id="CHEBI:60539"/>
    </cofactor>
    <text evidence="1">Binds 1 molybdenum-bis(molybdopterin guanine dinucleotide) (Mo-bis-MGD) cofactor per subunit.</text>
</comment>
<comment type="subunit">
    <text evidence="1">Component of the periplasmic nitrate reductase NapAB complex composed of NapA and NapB.</text>
</comment>
<comment type="subcellular location">
    <subcellularLocation>
        <location evidence="1">Periplasm</location>
    </subcellularLocation>
</comment>
<comment type="PTM">
    <text evidence="1">Predicted to be exported by the Tat system. The position of the signal peptide cleavage has not been experimentally proven.</text>
</comment>
<comment type="similarity">
    <text evidence="1">Belongs to the prokaryotic molybdopterin-containing oxidoreductase family. NasA/NapA/NarB subfamily.</text>
</comment>